<reference key="1">
    <citation type="journal article" date="2005" name="Plant Cell">
        <title>Plasmodesmal-associated protein kinase in tobacco and Arabidopsis recognizes a subset of non-cell-autonomous proteins.</title>
        <authorList>
            <person name="Lee J.-Y."/>
            <person name="Taoka K."/>
            <person name="Yoo B.-C."/>
            <person name="Ben-Nissan G."/>
            <person name="Kim D.-J."/>
            <person name="Lucas W.J."/>
        </authorList>
    </citation>
    <scope>NUCLEOTIDE SEQUENCE [MRNA]</scope>
    <scope>SUBCELLULAR LOCATION</scope>
</reference>
<reference key="2">
    <citation type="journal article" date="2000" name="DNA Res.">
        <title>Structural analysis of Arabidopsis thaliana chromosome 5. X. Sequence features of the regions of 3,076,755 bp covered by sixty P1 and TAC clones.</title>
        <authorList>
            <person name="Sato S."/>
            <person name="Nakamura Y."/>
            <person name="Kaneko T."/>
            <person name="Katoh T."/>
            <person name="Asamizu E."/>
            <person name="Kotani H."/>
            <person name="Tabata S."/>
        </authorList>
    </citation>
    <scope>NUCLEOTIDE SEQUENCE [LARGE SCALE GENOMIC DNA]</scope>
    <source>
        <strain>cv. Columbia</strain>
    </source>
</reference>
<reference key="3">
    <citation type="journal article" date="2017" name="Plant J.">
        <title>Araport11: a complete reannotation of the Arabidopsis thaliana reference genome.</title>
        <authorList>
            <person name="Cheng C.Y."/>
            <person name="Krishnakumar V."/>
            <person name="Chan A.P."/>
            <person name="Thibaud-Nissen F."/>
            <person name="Schobel S."/>
            <person name="Town C.D."/>
        </authorList>
    </citation>
    <scope>GENOME REANNOTATION</scope>
    <source>
        <strain>cv. Columbia</strain>
    </source>
</reference>
<reference key="4">
    <citation type="journal article" date="2002" name="Science">
        <title>Functional annotation of a full-length Arabidopsis cDNA collection.</title>
        <authorList>
            <person name="Seki M."/>
            <person name="Narusaka M."/>
            <person name="Kamiya A."/>
            <person name="Ishida J."/>
            <person name="Satou M."/>
            <person name="Sakurai T."/>
            <person name="Nakajima M."/>
            <person name="Enju A."/>
            <person name="Akiyama K."/>
            <person name="Oono Y."/>
            <person name="Muramatsu M."/>
            <person name="Hayashizaki Y."/>
            <person name="Kawai J."/>
            <person name="Carninci P."/>
            <person name="Itoh M."/>
            <person name="Ishii Y."/>
            <person name="Arakawa T."/>
            <person name="Shibata K."/>
            <person name="Shinagawa A."/>
            <person name="Shinozaki K."/>
        </authorList>
    </citation>
    <scope>NUCLEOTIDE SEQUENCE [LARGE SCALE MRNA]</scope>
    <source>
        <strain>cv. Columbia</strain>
    </source>
</reference>
<reference key="5">
    <citation type="journal article" date="2003" name="Science">
        <title>Empirical analysis of transcriptional activity in the Arabidopsis genome.</title>
        <authorList>
            <person name="Yamada K."/>
            <person name="Lim J."/>
            <person name="Dale J.M."/>
            <person name="Chen H."/>
            <person name="Shinn P."/>
            <person name="Palm C.J."/>
            <person name="Southwick A.M."/>
            <person name="Wu H.C."/>
            <person name="Kim C.J."/>
            <person name="Nguyen M."/>
            <person name="Pham P.K."/>
            <person name="Cheuk R.F."/>
            <person name="Karlin-Newmann G."/>
            <person name="Liu S.X."/>
            <person name="Lam B."/>
            <person name="Sakano H."/>
            <person name="Wu T."/>
            <person name="Yu G."/>
            <person name="Miranda M."/>
            <person name="Quach H.L."/>
            <person name="Tripp M."/>
            <person name="Chang C.H."/>
            <person name="Lee J.M."/>
            <person name="Toriumi M.J."/>
            <person name="Chan M.M."/>
            <person name="Tang C.C."/>
            <person name="Onodera C.S."/>
            <person name="Deng J.M."/>
            <person name="Akiyama K."/>
            <person name="Ansari Y."/>
            <person name="Arakawa T."/>
            <person name="Banh J."/>
            <person name="Banno F."/>
            <person name="Bowser L."/>
            <person name="Brooks S.Y."/>
            <person name="Carninci P."/>
            <person name="Chao Q."/>
            <person name="Choy N."/>
            <person name="Enju A."/>
            <person name="Goldsmith A.D."/>
            <person name="Gurjal M."/>
            <person name="Hansen N.F."/>
            <person name="Hayashizaki Y."/>
            <person name="Johnson-Hopson C."/>
            <person name="Hsuan V.W."/>
            <person name="Iida K."/>
            <person name="Karnes M."/>
            <person name="Khan S."/>
            <person name="Koesema E."/>
            <person name="Ishida J."/>
            <person name="Jiang P.X."/>
            <person name="Jones T."/>
            <person name="Kawai J."/>
            <person name="Kamiya A."/>
            <person name="Meyers C."/>
            <person name="Nakajima M."/>
            <person name="Narusaka M."/>
            <person name="Seki M."/>
            <person name="Sakurai T."/>
            <person name="Satou M."/>
            <person name="Tamse R."/>
            <person name="Vaysberg M."/>
            <person name="Wallender E.K."/>
            <person name="Wong C."/>
            <person name="Yamamura Y."/>
            <person name="Yuan S."/>
            <person name="Shinozaki K."/>
            <person name="Davis R.W."/>
            <person name="Theologis A."/>
            <person name="Ecker J.R."/>
        </authorList>
    </citation>
    <scope>NUCLEOTIDE SEQUENCE [LARGE SCALE MRNA]</scope>
    <source>
        <strain>cv. Columbia</strain>
    </source>
</reference>
<feature type="chain" id="PRO_0000437151" description="Casein kinase 1-like protein 12">
    <location>
        <begin position="1"/>
        <end position="435"/>
    </location>
</feature>
<feature type="domain" description="Protein kinase" evidence="2">
    <location>
        <begin position="9"/>
        <end position="278"/>
    </location>
</feature>
<feature type="region of interest" description="Disordered" evidence="3">
    <location>
        <begin position="313"/>
        <end position="363"/>
    </location>
</feature>
<feature type="region of interest" description="Disordered" evidence="3">
    <location>
        <begin position="394"/>
        <end position="414"/>
    </location>
</feature>
<feature type="active site" description="Proton acceptor" evidence="2">
    <location>
        <position position="128"/>
    </location>
</feature>
<feature type="binding site" evidence="2">
    <location>
        <begin position="15"/>
        <end position="23"/>
    </location>
    <ligand>
        <name>ATP</name>
        <dbReference type="ChEBI" id="CHEBI:30616"/>
    </ligand>
</feature>
<feature type="binding site" evidence="2">
    <location>
        <position position="38"/>
    </location>
    <ligand>
        <name>ATP</name>
        <dbReference type="ChEBI" id="CHEBI:30616"/>
    </ligand>
</feature>
<proteinExistence type="evidence at transcript level"/>
<name>CKL12_ARATH</name>
<evidence type="ECO:0000250" key="1">
    <source>
        <dbReference type="UniProtKB" id="P48730"/>
    </source>
</evidence>
<evidence type="ECO:0000255" key="2">
    <source>
        <dbReference type="PROSITE-ProRule" id="PRU00159"/>
    </source>
</evidence>
<evidence type="ECO:0000256" key="3">
    <source>
        <dbReference type="SAM" id="MobiDB-lite"/>
    </source>
</evidence>
<evidence type="ECO:0000269" key="4">
    <source>
    </source>
</evidence>
<evidence type="ECO:0000303" key="5">
    <source>
    </source>
</evidence>
<evidence type="ECO:0000305" key="6"/>
<evidence type="ECO:0000312" key="7">
    <source>
        <dbReference type="Araport" id="AT5G57015"/>
    </source>
</evidence>
<keyword id="KW-0067">ATP-binding</keyword>
<keyword id="KW-0963">Cytoplasm</keyword>
<keyword id="KW-0418">Kinase</keyword>
<keyword id="KW-0547">Nucleotide-binding</keyword>
<keyword id="KW-1185">Reference proteome</keyword>
<keyword id="KW-0723">Serine/threonine-protein kinase</keyword>
<keyword id="KW-0808">Transferase</keyword>
<sequence>MEPRVGNKYRLGRKIGSGSFGEIYLGTHIQTNEEVAIKLENVKTKHPQLLYESKLYRILQGGTGVPNIKWFGVEGDYNTLVMDLLGPSLEDLFNFCSRKLSLKSVLMLADQMINRVEYFHSKSFLHRDLKPDNFLMGLGRRANQVHIIDFGLAKKYRDNTTHQHIPYRENKNLTGTARYASMNTHLGIEQSRRDDLESLGYILMYFLKGSLPWQGLKAGTKKQKYERISEKKVSTSIESLCRGYPSEFASYFHYCRSLRFDDKPDYGYLKRIFRDLFIREGFQFDYVFDWTILKYQQSQLTAPPSRGLVSPAVGTSAGLPPGLTSIDRYGGEEEGGRPPMDSSRRRMSGALENSGNLSSRGPMMPSSSLFAQSAGSSRRVTSEELQRCRTGAGLRNSPVVTTPEGKRSSSTRKHYDSAIKGIETLQVSDERFHHH</sequence>
<accession>Q8VYK9</accession>
<gene>
    <name evidence="5" type="primary">CKL12</name>
    <name evidence="7" type="ordered locus">At5g57015</name>
</gene>
<organism>
    <name type="scientific">Arabidopsis thaliana</name>
    <name type="common">Mouse-ear cress</name>
    <dbReference type="NCBI Taxonomy" id="3702"/>
    <lineage>
        <taxon>Eukaryota</taxon>
        <taxon>Viridiplantae</taxon>
        <taxon>Streptophyta</taxon>
        <taxon>Embryophyta</taxon>
        <taxon>Tracheophyta</taxon>
        <taxon>Spermatophyta</taxon>
        <taxon>Magnoliopsida</taxon>
        <taxon>eudicotyledons</taxon>
        <taxon>Gunneridae</taxon>
        <taxon>Pentapetalae</taxon>
        <taxon>rosids</taxon>
        <taxon>malvids</taxon>
        <taxon>Brassicales</taxon>
        <taxon>Brassicaceae</taxon>
        <taxon>Camelineae</taxon>
        <taxon>Arabidopsis</taxon>
    </lineage>
</organism>
<protein>
    <recommendedName>
        <fullName evidence="6">Casein kinase 1-like protein 12</fullName>
        <ecNumber evidence="6">2.7.11.1</ecNumber>
    </recommendedName>
    <alternativeName>
        <fullName evidence="5">Protein CASEIN KINASE I-LIKE 12</fullName>
    </alternativeName>
</protein>
<dbReference type="EC" id="2.7.11.1" evidence="6"/>
<dbReference type="EMBL" id="AY943855">
    <property type="protein sequence ID" value="AAY24545.1"/>
    <property type="molecule type" value="mRNA"/>
</dbReference>
<dbReference type="EMBL" id="AB024035">
    <property type="status" value="NOT_ANNOTATED_CDS"/>
    <property type="molecule type" value="Genomic_DNA"/>
</dbReference>
<dbReference type="EMBL" id="CP002688">
    <property type="protein sequence ID" value="AED96834.1"/>
    <property type="molecule type" value="Genomic_DNA"/>
</dbReference>
<dbReference type="EMBL" id="AK118919">
    <property type="protein sequence ID" value="BAC43502.1"/>
    <property type="molecule type" value="mRNA"/>
</dbReference>
<dbReference type="EMBL" id="AY070458">
    <property type="protein sequence ID" value="AAL49861.1"/>
    <property type="molecule type" value="mRNA"/>
</dbReference>
<dbReference type="EMBL" id="AY091321">
    <property type="protein sequence ID" value="AAM14260.1"/>
    <property type="molecule type" value="mRNA"/>
</dbReference>
<dbReference type="RefSeq" id="NP_680447.1">
    <property type="nucleotide sequence ID" value="NM_148142.3"/>
</dbReference>
<dbReference type="SMR" id="Q8VYK9"/>
<dbReference type="FunCoup" id="Q8VYK9">
    <property type="interactions" value="4153"/>
</dbReference>
<dbReference type="STRING" id="3702.Q8VYK9"/>
<dbReference type="iPTMnet" id="Q8VYK9"/>
<dbReference type="PaxDb" id="3702-AT5G57015.1"/>
<dbReference type="ProteomicsDB" id="246812"/>
<dbReference type="EnsemblPlants" id="AT5G57015.1">
    <property type="protein sequence ID" value="AT5G57015.1"/>
    <property type="gene ID" value="AT5G57015"/>
</dbReference>
<dbReference type="GeneID" id="835804"/>
<dbReference type="Gramene" id="AT5G57015.1">
    <property type="protein sequence ID" value="AT5G57015.1"/>
    <property type="gene ID" value="AT5G57015"/>
</dbReference>
<dbReference type="KEGG" id="ath:AT5G57015"/>
<dbReference type="Araport" id="AT5G57015"/>
<dbReference type="TAIR" id="AT5G57015">
    <property type="gene designation" value="CKL12"/>
</dbReference>
<dbReference type="eggNOG" id="KOG1164">
    <property type="taxonomic scope" value="Eukaryota"/>
</dbReference>
<dbReference type="HOGENOM" id="CLU_019279_0_0_1"/>
<dbReference type="InParanoid" id="Q8VYK9"/>
<dbReference type="OMA" id="AREGYQW"/>
<dbReference type="OrthoDB" id="5800476at2759"/>
<dbReference type="PhylomeDB" id="Q8VYK9"/>
<dbReference type="PRO" id="PR:Q8VYK9"/>
<dbReference type="Proteomes" id="UP000006548">
    <property type="component" value="Chromosome 5"/>
</dbReference>
<dbReference type="ExpressionAtlas" id="Q8VYK9">
    <property type="expression patterns" value="baseline and differential"/>
</dbReference>
<dbReference type="GO" id="GO:0005737">
    <property type="term" value="C:cytoplasm"/>
    <property type="evidence" value="ECO:0000314"/>
    <property type="project" value="TAIR"/>
</dbReference>
<dbReference type="GO" id="GO:0005524">
    <property type="term" value="F:ATP binding"/>
    <property type="evidence" value="ECO:0007669"/>
    <property type="project" value="UniProtKB-KW"/>
</dbReference>
<dbReference type="GO" id="GO:0106310">
    <property type="term" value="F:protein serine kinase activity"/>
    <property type="evidence" value="ECO:0007669"/>
    <property type="project" value="RHEA"/>
</dbReference>
<dbReference type="GO" id="GO:0004674">
    <property type="term" value="F:protein serine/threonine kinase activity"/>
    <property type="evidence" value="ECO:0007669"/>
    <property type="project" value="UniProtKB-KW"/>
</dbReference>
<dbReference type="CDD" id="cd14125">
    <property type="entry name" value="STKc_CK1_delta_epsilon"/>
    <property type="match status" value="1"/>
</dbReference>
<dbReference type="FunFam" id="1.10.510.10:FF:000134">
    <property type="entry name" value="Casein kinase I isoform delta-like"/>
    <property type="match status" value="1"/>
</dbReference>
<dbReference type="FunFam" id="3.30.200.20:FF:000538">
    <property type="entry name" value="Putative Casein kinase I"/>
    <property type="match status" value="1"/>
</dbReference>
<dbReference type="Gene3D" id="1.10.510.10">
    <property type="entry name" value="Transferase(Phosphotransferase) domain 1"/>
    <property type="match status" value="1"/>
</dbReference>
<dbReference type="InterPro" id="IPR050235">
    <property type="entry name" value="CK1_Ser-Thr_kinase"/>
</dbReference>
<dbReference type="InterPro" id="IPR011009">
    <property type="entry name" value="Kinase-like_dom_sf"/>
</dbReference>
<dbReference type="InterPro" id="IPR000719">
    <property type="entry name" value="Prot_kinase_dom"/>
</dbReference>
<dbReference type="InterPro" id="IPR017441">
    <property type="entry name" value="Protein_kinase_ATP_BS"/>
</dbReference>
<dbReference type="InterPro" id="IPR008271">
    <property type="entry name" value="Ser/Thr_kinase_AS"/>
</dbReference>
<dbReference type="PANTHER" id="PTHR11909">
    <property type="entry name" value="CASEIN KINASE-RELATED"/>
    <property type="match status" value="1"/>
</dbReference>
<dbReference type="Pfam" id="PF00069">
    <property type="entry name" value="Pkinase"/>
    <property type="match status" value="1"/>
</dbReference>
<dbReference type="SMART" id="SM00220">
    <property type="entry name" value="S_TKc"/>
    <property type="match status" value="1"/>
</dbReference>
<dbReference type="SUPFAM" id="SSF56112">
    <property type="entry name" value="Protein kinase-like (PK-like)"/>
    <property type="match status" value="1"/>
</dbReference>
<dbReference type="PROSITE" id="PS00107">
    <property type="entry name" value="PROTEIN_KINASE_ATP"/>
    <property type="match status" value="1"/>
</dbReference>
<dbReference type="PROSITE" id="PS50011">
    <property type="entry name" value="PROTEIN_KINASE_DOM"/>
    <property type="match status" value="1"/>
</dbReference>
<dbReference type="PROSITE" id="PS00108">
    <property type="entry name" value="PROTEIN_KINASE_ST"/>
    <property type="match status" value="1"/>
</dbReference>
<comment type="function">
    <text evidence="1">Casein kinases are operationally defined by their preferential utilization of acidic proteins such as caseins as substrates. It can phosphorylate a large number of proteins.</text>
</comment>
<comment type="catalytic activity">
    <reaction evidence="6">
        <text>L-seryl-[protein] + ATP = O-phospho-L-seryl-[protein] + ADP + H(+)</text>
        <dbReference type="Rhea" id="RHEA:17989"/>
        <dbReference type="Rhea" id="RHEA-COMP:9863"/>
        <dbReference type="Rhea" id="RHEA-COMP:11604"/>
        <dbReference type="ChEBI" id="CHEBI:15378"/>
        <dbReference type="ChEBI" id="CHEBI:29999"/>
        <dbReference type="ChEBI" id="CHEBI:30616"/>
        <dbReference type="ChEBI" id="CHEBI:83421"/>
        <dbReference type="ChEBI" id="CHEBI:456216"/>
        <dbReference type="EC" id="2.7.11.1"/>
    </reaction>
</comment>
<comment type="catalytic activity">
    <reaction evidence="6">
        <text>L-threonyl-[protein] + ATP = O-phospho-L-threonyl-[protein] + ADP + H(+)</text>
        <dbReference type="Rhea" id="RHEA:46608"/>
        <dbReference type="Rhea" id="RHEA-COMP:11060"/>
        <dbReference type="Rhea" id="RHEA-COMP:11605"/>
        <dbReference type="ChEBI" id="CHEBI:15378"/>
        <dbReference type="ChEBI" id="CHEBI:30013"/>
        <dbReference type="ChEBI" id="CHEBI:30616"/>
        <dbReference type="ChEBI" id="CHEBI:61977"/>
        <dbReference type="ChEBI" id="CHEBI:456216"/>
        <dbReference type="EC" id="2.7.11.1"/>
    </reaction>
</comment>
<comment type="subunit">
    <text evidence="1">Monomer.</text>
</comment>
<comment type="subcellular location">
    <subcellularLocation>
        <location evidence="4">Cytoplasm</location>
    </subcellularLocation>
</comment>
<comment type="PTM">
    <text evidence="1">Autophosphorylated.</text>
</comment>
<comment type="similarity">
    <text evidence="6">Belongs to the protein kinase superfamily. CK1 Ser/Thr protein kinase family. Casein kinase I subfamily.</text>
</comment>